<evidence type="ECO:0000250" key="1"/>
<evidence type="ECO:0000269" key="2">
    <source>
    </source>
</evidence>
<evidence type="ECO:0000305" key="3"/>
<name>ADH1B_SAAHA</name>
<proteinExistence type="evidence at protein level"/>
<feature type="chain" id="PRO_0000160678" description="Alcohol dehydrogenase 1B">
    <location>
        <begin position="1"/>
        <end position="375"/>
    </location>
</feature>
<feature type="binding site" evidence="1">
    <location>
        <position position="46"/>
    </location>
    <ligand>
        <name>Zn(2+)</name>
        <dbReference type="ChEBI" id="CHEBI:29105"/>
        <label>1</label>
        <note>catalytic</note>
    </ligand>
</feature>
<feature type="binding site" evidence="1">
    <location>
        <position position="67"/>
    </location>
    <ligand>
        <name>Zn(2+)</name>
        <dbReference type="ChEBI" id="CHEBI:29105"/>
        <label>1</label>
        <note>catalytic</note>
    </ligand>
</feature>
<feature type="binding site" evidence="1">
    <location>
        <position position="97"/>
    </location>
    <ligand>
        <name>Zn(2+)</name>
        <dbReference type="ChEBI" id="CHEBI:29105"/>
        <label>2</label>
    </ligand>
</feature>
<feature type="binding site" evidence="1">
    <location>
        <position position="100"/>
    </location>
    <ligand>
        <name>Zn(2+)</name>
        <dbReference type="ChEBI" id="CHEBI:29105"/>
        <label>2</label>
    </ligand>
</feature>
<feature type="binding site" evidence="1">
    <location>
        <position position="103"/>
    </location>
    <ligand>
        <name>Zn(2+)</name>
        <dbReference type="ChEBI" id="CHEBI:29105"/>
        <label>2</label>
    </ligand>
</feature>
<feature type="binding site" evidence="1">
    <location>
        <position position="111"/>
    </location>
    <ligand>
        <name>Zn(2+)</name>
        <dbReference type="ChEBI" id="CHEBI:29105"/>
        <label>2</label>
    </ligand>
</feature>
<feature type="binding site" evidence="1">
    <location>
        <position position="174"/>
    </location>
    <ligand>
        <name>Zn(2+)</name>
        <dbReference type="ChEBI" id="CHEBI:29105"/>
        <label>1</label>
        <note>catalytic</note>
    </ligand>
</feature>
<feature type="binding site" evidence="1">
    <location>
        <begin position="199"/>
        <end position="204"/>
    </location>
    <ligand>
        <name>NAD(+)</name>
        <dbReference type="ChEBI" id="CHEBI:57540"/>
    </ligand>
</feature>
<feature type="binding site" evidence="1">
    <location>
        <position position="223"/>
    </location>
    <ligand>
        <name>NAD(+)</name>
        <dbReference type="ChEBI" id="CHEBI:57540"/>
    </ligand>
</feature>
<feature type="binding site" evidence="1">
    <location>
        <position position="228"/>
    </location>
    <ligand>
        <name>NAD(+)</name>
        <dbReference type="ChEBI" id="CHEBI:57540"/>
    </ligand>
</feature>
<feature type="binding site" evidence="1">
    <location>
        <begin position="293"/>
        <end position="295"/>
    </location>
    <ligand>
        <name>NAD(+)</name>
        <dbReference type="ChEBI" id="CHEBI:57540"/>
    </ligand>
</feature>
<feature type="binding site" evidence="1">
    <location>
        <position position="370"/>
    </location>
    <ligand>
        <name>NAD(+)</name>
        <dbReference type="ChEBI" id="CHEBI:57540"/>
    </ligand>
</feature>
<feature type="modified residue" description="N-acetylserine" evidence="2">
    <location>
        <position position="1"/>
    </location>
</feature>
<accession>P25406</accession>
<dbReference type="EC" id="1.1.1.1"/>
<dbReference type="PIR" id="S62639">
    <property type="entry name" value="S62639"/>
</dbReference>
<dbReference type="SMR" id="P25406"/>
<dbReference type="iPTMnet" id="P25406"/>
<dbReference type="GO" id="GO:0005829">
    <property type="term" value="C:cytosol"/>
    <property type="evidence" value="ECO:0007669"/>
    <property type="project" value="TreeGrafter"/>
</dbReference>
<dbReference type="GO" id="GO:0004745">
    <property type="term" value="F:all-trans-retinol dehydrogenase (NAD+) activity"/>
    <property type="evidence" value="ECO:0007669"/>
    <property type="project" value="TreeGrafter"/>
</dbReference>
<dbReference type="GO" id="GO:0008270">
    <property type="term" value="F:zinc ion binding"/>
    <property type="evidence" value="ECO:0007669"/>
    <property type="project" value="InterPro"/>
</dbReference>
<dbReference type="GO" id="GO:0042573">
    <property type="term" value="P:retinoic acid metabolic process"/>
    <property type="evidence" value="ECO:0007669"/>
    <property type="project" value="TreeGrafter"/>
</dbReference>
<dbReference type="GO" id="GO:0042572">
    <property type="term" value="P:retinol metabolic process"/>
    <property type="evidence" value="ECO:0007669"/>
    <property type="project" value="TreeGrafter"/>
</dbReference>
<dbReference type="CDD" id="cd08299">
    <property type="entry name" value="alcohol_DH_class_I_II_IV"/>
    <property type="match status" value="1"/>
</dbReference>
<dbReference type="FunFam" id="3.40.50.720:FF:000003">
    <property type="entry name" value="S-(hydroxymethyl)glutathione dehydrogenase"/>
    <property type="match status" value="1"/>
</dbReference>
<dbReference type="FunFam" id="3.90.180.10:FF:000001">
    <property type="entry name" value="S-(hydroxymethyl)glutathione dehydrogenase"/>
    <property type="match status" value="1"/>
</dbReference>
<dbReference type="Gene3D" id="3.90.180.10">
    <property type="entry name" value="Medium-chain alcohol dehydrogenases, catalytic domain"/>
    <property type="match status" value="1"/>
</dbReference>
<dbReference type="Gene3D" id="3.40.50.720">
    <property type="entry name" value="NAD(P)-binding Rossmann-like Domain"/>
    <property type="match status" value="1"/>
</dbReference>
<dbReference type="InterPro" id="IPR013149">
    <property type="entry name" value="ADH-like_C"/>
</dbReference>
<dbReference type="InterPro" id="IPR013154">
    <property type="entry name" value="ADH-like_N"/>
</dbReference>
<dbReference type="InterPro" id="IPR002328">
    <property type="entry name" value="ADH_Zn_CS"/>
</dbReference>
<dbReference type="InterPro" id="IPR011032">
    <property type="entry name" value="GroES-like_sf"/>
</dbReference>
<dbReference type="InterPro" id="IPR036291">
    <property type="entry name" value="NAD(P)-bd_dom_sf"/>
</dbReference>
<dbReference type="InterPro" id="IPR020843">
    <property type="entry name" value="PKS_ER"/>
</dbReference>
<dbReference type="PANTHER" id="PTHR43880">
    <property type="entry name" value="ALCOHOL DEHYDROGENASE"/>
    <property type="match status" value="1"/>
</dbReference>
<dbReference type="PANTHER" id="PTHR43880:SF1">
    <property type="entry name" value="ALCOHOL DEHYDROGENASE 1A"/>
    <property type="match status" value="1"/>
</dbReference>
<dbReference type="Pfam" id="PF08240">
    <property type="entry name" value="ADH_N"/>
    <property type="match status" value="1"/>
</dbReference>
<dbReference type="Pfam" id="PF00107">
    <property type="entry name" value="ADH_zinc_N"/>
    <property type="match status" value="1"/>
</dbReference>
<dbReference type="SMART" id="SM00829">
    <property type="entry name" value="PKS_ER"/>
    <property type="match status" value="1"/>
</dbReference>
<dbReference type="SUPFAM" id="SSF50129">
    <property type="entry name" value="GroES-like"/>
    <property type="match status" value="2"/>
</dbReference>
<dbReference type="SUPFAM" id="SSF51735">
    <property type="entry name" value="NAD(P)-binding Rossmann-fold domains"/>
    <property type="match status" value="1"/>
</dbReference>
<dbReference type="PROSITE" id="PS00059">
    <property type="entry name" value="ADH_ZINC"/>
    <property type="match status" value="1"/>
</dbReference>
<comment type="catalytic activity">
    <reaction>
        <text>a primary alcohol + NAD(+) = an aldehyde + NADH + H(+)</text>
        <dbReference type="Rhea" id="RHEA:10736"/>
        <dbReference type="ChEBI" id="CHEBI:15378"/>
        <dbReference type="ChEBI" id="CHEBI:15734"/>
        <dbReference type="ChEBI" id="CHEBI:17478"/>
        <dbReference type="ChEBI" id="CHEBI:57540"/>
        <dbReference type="ChEBI" id="CHEBI:57945"/>
        <dbReference type="EC" id="1.1.1.1"/>
    </reaction>
</comment>
<comment type="catalytic activity">
    <reaction>
        <text>a secondary alcohol + NAD(+) = a ketone + NADH + H(+)</text>
        <dbReference type="Rhea" id="RHEA:10740"/>
        <dbReference type="ChEBI" id="CHEBI:15378"/>
        <dbReference type="ChEBI" id="CHEBI:17087"/>
        <dbReference type="ChEBI" id="CHEBI:35681"/>
        <dbReference type="ChEBI" id="CHEBI:57540"/>
        <dbReference type="ChEBI" id="CHEBI:57945"/>
        <dbReference type="EC" id="1.1.1.1"/>
    </reaction>
</comment>
<comment type="cofactor">
    <cofactor evidence="1">
        <name>Zn(2+)</name>
        <dbReference type="ChEBI" id="CHEBI:29105"/>
    </cofactor>
    <text evidence="1">Binds 2 Zn(2+) ions per subunit.</text>
</comment>
<comment type="subunit">
    <text>Multimeric (with different ratios of monomers).</text>
</comment>
<comment type="subcellular location">
    <subcellularLocation>
        <location>Cytoplasm</location>
    </subcellularLocation>
</comment>
<comment type="miscellaneous">
    <text>In U.hardwickii there are two isozymes of alcohol dehydrogenase I.</text>
</comment>
<comment type="similarity">
    <text evidence="3">Belongs to the zinc-containing alcohol dehydrogenase family. Class-I subfamily.</text>
</comment>
<reference key="1">
    <citation type="journal article" date="1996" name="Eur. J. Biochem.">
        <title>Linking of isozyme and class variability patterns in the emergence of novel alcohol dehydrogenase functions. Characterization of isozymes in Uromastix hardwickii.</title>
        <authorList>
            <person name="Hjelmqvist L."/>
            <person name="Shafqat J."/>
            <person name="Siddiqi A.R."/>
            <person name="Joernvall H."/>
        </authorList>
    </citation>
    <scope>PROTEIN SEQUENCE</scope>
</reference>
<reference key="2">
    <citation type="journal article" date="1992" name="FEBS Lett.">
        <title>Reptilian alcohol dehydrogenase. Heterogeneity relevant to class multiplicity of the mammalian enzyme.</title>
        <authorList>
            <person name="Hjelmqvist L."/>
            <person name="Ericsson M."/>
            <person name="Shafqat J."/>
            <person name="Carlquist M."/>
            <person name="Siddiqi A.R."/>
            <person name="Hoeoeg J.-O."/>
            <person name="Joernvall H."/>
        </authorList>
    </citation>
    <scope>PROTEIN SEQUENCE OF 1-18</scope>
    <scope>ACETYLATION AT SER-1</scope>
    <source>
        <tissue>Liver</tissue>
    </source>
</reference>
<sequence length="375" mass="40060">STAGKVIKCKAAVVWEPKKPFSIVEIEVAPPKAHEVRIKILASGICRSDDHVLSGALKVNFPIILGHEAAGVVESVGEGVTSMKPGDKVIPIFLPQCGECNSCRHPRGNVCKKSELGPFTGLLYDGTSRFTYQGKPVYHFVRTGTFTEYTVAPEDSVVKIDASAPLEKVCLIGCGFSTGYGAAINSAKVQPGSTCAVFGLGGVGLSAVMGCKAAGASRIIGIDINKEKFPKAKELGATECVNPLDYKKPINEVLFDMTDGEGVEYSFEVIGRTDTMTAALASCHNNYGTSVIVGVPPSASQIAFDPLLLFTGRTWKGSVFGGWKSKDAVPRLVSDFMGKKFILDPLITHTMPFEKINEGFELLRSGKSIRTVLTF</sequence>
<organism>
    <name type="scientific">Saara hardwickii</name>
    <name type="common">Indian spiny-tailed lizard</name>
    <name type="synonym">Uromastyx hardwickii</name>
    <dbReference type="NCBI Taxonomy" id="40250"/>
    <lineage>
        <taxon>Eukaryota</taxon>
        <taxon>Metazoa</taxon>
        <taxon>Chordata</taxon>
        <taxon>Craniata</taxon>
        <taxon>Vertebrata</taxon>
        <taxon>Euteleostomi</taxon>
        <taxon>Lepidosauria</taxon>
        <taxon>Squamata</taxon>
        <taxon>Bifurcata</taxon>
        <taxon>Unidentata</taxon>
        <taxon>Episquamata</taxon>
        <taxon>Toxicofera</taxon>
        <taxon>Iguania</taxon>
        <taxon>Acrodonta</taxon>
        <taxon>Agamidae</taxon>
        <taxon>Uromastycinae</taxon>
        <taxon>Saara</taxon>
    </lineage>
</organism>
<protein>
    <recommendedName>
        <fullName>Alcohol dehydrogenase 1B</fullName>
        <ecNumber>1.1.1.1</ecNumber>
    </recommendedName>
    <alternativeName>
        <fullName>Alcohol dehydrogenase I-B</fullName>
        <shortName>ADH IB</shortName>
    </alternativeName>
</protein>
<keyword id="KW-0007">Acetylation</keyword>
<keyword id="KW-0963">Cytoplasm</keyword>
<keyword id="KW-0903">Direct protein sequencing</keyword>
<keyword id="KW-0479">Metal-binding</keyword>
<keyword id="KW-0520">NAD</keyword>
<keyword id="KW-0560">Oxidoreductase</keyword>
<keyword id="KW-0862">Zinc</keyword>